<feature type="chain" id="PRO_0000113900" description="Protein GrpE">
    <location>
        <begin position="1"/>
        <end position="172"/>
    </location>
</feature>
<feature type="region of interest" description="Disordered" evidence="2">
    <location>
        <begin position="1"/>
        <end position="23"/>
    </location>
</feature>
<comment type="function">
    <text evidence="1">Participates actively in the response to hyperosmotic and heat shock by preventing the aggregation of stress-denatured proteins, in association with DnaK and GrpE. It is the nucleotide exchange factor for DnaK and may function as a thermosensor. Unfolded proteins bind initially to DnaJ; upon interaction with the DnaJ-bound protein, DnaK hydrolyzes its bound ATP, resulting in the formation of a stable complex. GrpE releases ADP from DnaK; ATP binding to DnaK triggers the release of the substrate protein, thus completing the reaction cycle. Several rounds of ATP-dependent interactions between DnaJ, DnaK and GrpE are required for fully efficient folding.</text>
</comment>
<comment type="subunit">
    <text evidence="1">Homodimer.</text>
</comment>
<comment type="subcellular location">
    <subcellularLocation>
        <location evidence="1">Cytoplasm</location>
    </subcellularLocation>
</comment>
<comment type="similarity">
    <text evidence="1">Belongs to the GrpE family.</text>
</comment>
<keyword id="KW-0143">Chaperone</keyword>
<keyword id="KW-0963">Cytoplasm</keyword>
<keyword id="KW-0346">Stress response</keyword>
<sequence length="172" mass="18938">MNQDHPEFDSEDLSQNPPETDPLKAEIESLRSEIALVKADALRERADLENQRKRIARDVENARKFANEKLLGELLPVFDSLDAGLTAAGTEPSPLRDGLDMTYKQLLKVAADNGLTLLDPVGQPFNPDQHQAISQGEAEGVAPGHVVQVFQKGYLLNDRLLRPALVVVAKHD</sequence>
<gene>
    <name evidence="1" type="primary">grpE</name>
    <name type="ordered locus">XAC1521</name>
</gene>
<organism>
    <name type="scientific">Xanthomonas axonopodis pv. citri (strain 306)</name>
    <dbReference type="NCBI Taxonomy" id="190486"/>
    <lineage>
        <taxon>Bacteria</taxon>
        <taxon>Pseudomonadati</taxon>
        <taxon>Pseudomonadota</taxon>
        <taxon>Gammaproteobacteria</taxon>
        <taxon>Lysobacterales</taxon>
        <taxon>Lysobacteraceae</taxon>
        <taxon>Xanthomonas</taxon>
    </lineage>
</organism>
<dbReference type="EMBL" id="AE008923">
    <property type="protein sequence ID" value="AAM36390.1"/>
    <property type="molecule type" value="Genomic_DNA"/>
</dbReference>
<dbReference type="RefSeq" id="WP_003483633.1">
    <property type="nucleotide sequence ID" value="NC_003919.1"/>
</dbReference>
<dbReference type="SMR" id="Q8PMB1"/>
<dbReference type="GeneID" id="97509897"/>
<dbReference type="KEGG" id="xac:XAC1521"/>
<dbReference type="eggNOG" id="COG0576">
    <property type="taxonomic scope" value="Bacteria"/>
</dbReference>
<dbReference type="HOGENOM" id="CLU_057217_6_0_6"/>
<dbReference type="Proteomes" id="UP000000576">
    <property type="component" value="Chromosome"/>
</dbReference>
<dbReference type="GO" id="GO:0005829">
    <property type="term" value="C:cytosol"/>
    <property type="evidence" value="ECO:0007669"/>
    <property type="project" value="TreeGrafter"/>
</dbReference>
<dbReference type="GO" id="GO:0000774">
    <property type="term" value="F:adenyl-nucleotide exchange factor activity"/>
    <property type="evidence" value="ECO:0007669"/>
    <property type="project" value="InterPro"/>
</dbReference>
<dbReference type="GO" id="GO:0042803">
    <property type="term" value="F:protein homodimerization activity"/>
    <property type="evidence" value="ECO:0007669"/>
    <property type="project" value="InterPro"/>
</dbReference>
<dbReference type="GO" id="GO:0051087">
    <property type="term" value="F:protein-folding chaperone binding"/>
    <property type="evidence" value="ECO:0007669"/>
    <property type="project" value="InterPro"/>
</dbReference>
<dbReference type="GO" id="GO:0051082">
    <property type="term" value="F:unfolded protein binding"/>
    <property type="evidence" value="ECO:0007669"/>
    <property type="project" value="TreeGrafter"/>
</dbReference>
<dbReference type="GO" id="GO:0006457">
    <property type="term" value="P:protein folding"/>
    <property type="evidence" value="ECO:0007669"/>
    <property type="project" value="InterPro"/>
</dbReference>
<dbReference type="CDD" id="cd00446">
    <property type="entry name" value="GrpE"/>
    <property type="match status" value="1"/>
</dbReference>
<dbReference type="FunFam" id="2.30.22.10:FF:000001">
    <property type="entry name" value="Protein GrpE"/>
    <property type="match status" value="1"/>
</dbReference>
<dbReference type="Gene3D" id="3.90.20.20">
    <property type="match status" value="1"/>
</dbReference>
<dbReference type="Gene3D" id="2.30.22.10">
    <property type="entry name" value="Head domain of nucleotide exchange factor GrpE"/>
    <property type="match status" value="1"/>
</dbReference>
<dbReference type="HAMAP" id="MF_01151">
    <property type="entry name" value="GrpE"/>
    <property type="match status" value="1"/>
</dbReference>
<dbReference type="InterPro" id="IPR000740">
    <property type="entry name" value="GrpE"/>
</dbReference>
<dbReference type="InterPro" id="IPR013805">
    <property type="entry name" value="GrpE_coiled_coil"/>
</dbReference>
<dbReference type="InterPro" id="IPR009012">
    <property type="entry name" value="GrpE_head"/>
</dbReference>
<dbReference type="NCBIfam" id="NF010738">
    <property type="entry name" value="PRK14140.1"/>
    <property type="match status" value="1"/>
</dbReference>
<dbReference type="NCBIfam" id="NF010745">
    <property type="entry name" value="PRK14147.1"/>
    <property type="match status" value="1"/>
</dbReference>
<dbReference type="PANTHER" id="PTHR21237">
    <property type="entry name" value="GRPE PROTEIN"/>
    <property type="match status" value="1"/>
</dbReference>
<dbReference type="PANTHER" id="PTHR21237:SF23">
    <property type="entry name" value="GRPE PROTEIN HOMOLOG, MITOCHONDRIAL"/>
    <property type="match status" value="1"/>
</dbReference>
<dbReference type="Pfam" id="PF01025">
    <property type="entry name" value="GrpE"/>
    <property type="match status" value="1"/>
</dbReference>
<dbReference type="PRINTS" id="PR00773">
    <property type="entry name" value="GRPEPROTEIN"/>
</dbReference>
<dbReference type="SUPFAM" id="SSF58014">
    <property type="entry name" value="Coiled-coil domain of nucleotide exchange factor GrpE"/>
    <property type="match status" value="1"/>
</dbReference>
<dbReference type="SUPFAM" id="SSF51064">
    <property type="entry name" value="Head domain of nucleotide exchange factor GrpE"/>
    <property type="match status" value="1"/>
</dbReference>
<dbReference type="PROSITE" id="PS01071">
    <property type="entry name" value="GRPE"/>
    <property type="match status" value="1"/>
</dbReference>
<protein>
    <recommendedName>
        <fullName evidence="1">Protein GrpE</fullName>
    </recommendedName>
    <alternativeName>
        <fullName evidence="1">HSP-70 cofactor</fullName>
    </alternativeName>
</protein>
<accession>Q8PMB1</accession>
<reference key="1">
    <citation type="journal article" date="2002" name="Nature">
        <title>Comparison of the genomes of two Xanthomonas pathogens with differing host specificities.</title>
        <authorList>
            <person name="da Silva A.C.R."/>
            <person name="Ferro J.A."/>
            <person name="Reinach F.C."/>
            <person name="Farah C.S."/>
            <person name="Furlan L.R."/>
            <person name="Quaggio R.B."/>
            <person name="Monteiro-Vitorello C.B."/>
            <person name="Van Sluys M.A."/>
            <person name="Almeida N.F. Jr."/>
            <person name="Alves L.M.C."/>
            <person name="do Amaral A.M."/>
            <person name="Bertolini M.C."/>
            <person name="Camargo L.E.A."/>
            <person name="Camarotte G."/>
            <person name="Cannavan F."/>
            <person name="Cardozo J."/>
            <person name="Chambergo F."/>
            <person name="Ciapina L.P."/>
            <person name="Cicarelli R.M.B."/>
            <person name="Coutinho L.L."/>
            <person name="Cursino-Santos J.R."/>
            <person name="El-Dorry H."/>
            <person name="Faria J.B."/>
            <person name="Ferreira A.J.S."/>
            <person name="Ferreira R.C.C."/>
            <person name="Ferro M.I.T."/>
            <person name="Formighieri E.F."/>
            <person name="Franco M.C."/>
            <person name="Greggio C.C."/>
            <person name="Gruber A."/>
            <person name="Katsuyama A.M."/>
            <person name="Kishi L.T."/>
            <person name="Leite R.P."/>
            <person name="Lemos E.G.M."/>
            <person name="Lemos M.V.F."/>
            <person name="Locali E.C."/>
            <person name="Machado M.A."/>
            <person name="Madeira A.M.B.N."/>
            <person name="Martinez-Rossi N.M."/>
            <person name="Martins E.C."/>
            <person name="Meidanis J."/>
            <person name="Menck C.F.M."/>
            <person name="Miyaki C.Y."/>
            <person name="Moon D.H."/>
            <person name="Moreira L.M."/>
            <person name="Novo M.T.M."/>
            <person name="Okura V.K."/>
            <person name="Oliveira M.C."/>
            <person name="Oliveira V.R."/>
            <person name="Pereira H.A."/>
            <person name="Rossi A."/>
            <person name="Sena J.A.D."/>
            <person name="Silva C."/>
            <person name="de Souza R.F."/>
            <person name="Spinola L.A.F."/>
            <person name="Takita M.A."/>
            <person name="Tamura R.E."/>
            <person name="Teixeira E.C."/>
            <person name="Tezza R.I.D."/>
            <person name="Trindade dos Santos M."/>
            <person name="Truffi D."/>
            <person name="Tsai S.M."/>
            <person name="White F.F."/>
            <person name="Setubal J.C."/>
            <person name="Kitajima J.P."/>
        </authorList>
    </citation>
    <scope>NUCLEOTIDE SEQUENCE [LARGE SCALE GENOMIC DNA]</scope>
    <source>
        <strain>306</strain>
    </source>
</reference>
<name>GRPE_XANAC</name>
<proteinExistence type="inferred from homology"/>
<evidence type="ECO:0000255" key="1">
    <source>
        <dbReference type="HAMAP-Rule" id="MF_01151"/>
    </source>
</evidence>
<evidence type="ECO:0000256" key="2">
    <source>
        <dbReference type="SAM" id="MobiDB-lite"/>
    </source>
</evidence>